<name>BDBC_METRE</name>
<proteinExistence type="inferred from homology"/>
<geneLocation type="plasmid">
    <name>pCAR1</name>
</geneLocation>
<keyword id="KW-0997">Cell inner membrane</keyword>
<keyword id="KW-1003">Cell membrane</keyword>
<keyword id="KW-0143">Chaperone</keyword>
<keyword id="KW-1015">Disulfide bond</keyword>
<keyword id="KW-0249">Electron transport</keyword>
<keyword id="KW-0472">Membrane</keyword>
<keyword id="KW-0560">Oxidoreductase</keyword>
<keyword id="KW-0614">Plasmid</keyword>
<keyword id="KW-0676">Redox-active center</keyword>
<keyword id="KW-0812">Transmembrane</keyword>
<keyword id="KW-1133">Transmembrane helix</keyword>
<keyword id="KW-0813">Transport</keyword>
<comment type="function">
    <text evidence="1">Required for disulfide bond formation in some proteins.</text>
</comment>
<comment type="subcellular location">
    <subcellularLocation>
        <location evidence="1">Cell inner membrane</location>
        <topology evidence="1">Multi-pass membrane protein</topology>
    </subcellularLocation>
</comment>
<comment type="similarity">
    <text evidence="1">Belongs to the DsbB family. BdbC subfamily.</text>
</comment>
<accession>Q8GHM3</accession>
<protein>
    <recommendedName>
        <fullName evidence="1">Probable disulfide formation protein</fullName>
    </recommendedName>
    <alternativeName>
        <fullName evidence="1">Disulfide oxidoreductase</fullName>
    </alternativeName>
    <alternativeName>
        <fullName evidence="1">Thiol-disulfide oxidoreductase</fullName>
    </alternativeName>
</protein>
<sequence length="144" mass="15638">MNPQPSGMTWNLLLLTWLVALISTLSALFIGEVMGQAPCVLCWFQRAFMFPLTVILAIACYRSDFTVWRYALPLTVIGAALAFVHTLLYAGLIPQPIQPCTATGPSCSGAGMTLFGVVPLPALALFAFIIIAILLIIIRRRTTP</sequence>
<dbReference type="EMBL" id="AB088420">
    <property type="protein sequence ID" value="BAC41700.1"/>
    <property type="molecule type" value="Genomic_DNA"/>
</dbReference>
<dbReference type="RefSeq" id="NP_758722.1">
    <property type="nucleotide sequence ID" value="NC_004444.1"/>
</dbReference>
<dbReference type="RefSeq" id="WP_011078038.1">
    <property type="nucleotide sequence ID" value="NC_004444.1"/>
</dbReference>
<dbReference type="GO" id="GO:0005886">
    <property type="term" value="C:plasma membrane"/>
    <property type="evidence" value="ECO:0007669"/>
    <property type="project" value="UniProtKB-SubCell"/>
</dbReference>
<dbReference type="GO" id="GO:0015035">
    <property type="term" value="F:protein-disulfide reductase activity"/>
    <property type="evidence" value="ECO:0007669"/>
    <property type="project" value="InterPro"/>
</dbReference>
<dbReference type="GO" id="GO:0006457">
    <property type="term" value="P:protein folding"/>
    <property type="evidence" value="ECO:0007669"/>
    <property type="project" value="InterPro"/>
</dbReference>
<dbReference type="Gene3D" id="1.20.1550.10">
    <property type="entry name" value="DsbB-like"/>
    <property type="match status" value="1"/>
</dbReference>
<dbReference type="HAMAP" id="MF_00287">
    <property type="entry name" value="BdbC"/>
    <property type="match status" value="1"/>
</dbReference>
<dbReference type="InterPro" id="IPR003752">
    <property type="entry name" value="DiS_bond_form_DsbB/BdbC"/>
</dbReference>
<dbReference type="InterPro" id="IPR012187">
    <property type="entry name" value="Disulphide_bond_form_BdbC"/>
</dbReference>
<dbReference type="InterPro" id="IPR023380">
    <property type="entry name" value="DsbB-like_sf"/>
</dbReference>
<dbReference type="PANTHER" id="PTHR43469">
    <property type="entry name" value="DISULFIDE FORMATION PROTEIN-RELATED"/>
    <property type="match status" value="1"/>
</dbReference>
<dbReference type="PANTHER" id="PTHR43469:SF1">
    <property type="entry name" value="SPBETA PROPHAGE-DERIVED DISULFIDE BOND FORMATION PROTEIN B"/>
    <property type="match status" value="1"/>
</dbReference>
<dbReference type="Pfam" id="PF02600">
    <property type="entry name" value="DsbB"/>
    <property type="match status" value="1"/>
</dbReference>
<dbReference type="PIRSF" id="PIRSF036659">
    <property type="entry name" value="BdbC"/>
    <property type="match status" value="1"/>
</dbReference>
<dbReference type="SUPFAM" id="SSF158442">
    <property type="entry name" value="DsbB-like"/>
    <property type="match status" value="1"/>
</dbReference>
<feature type="chain" id="PRO_0000059386" description="Probable disulfide formation protein">
    <location>
        <begin position="1"/>
        <end position="144"/>
    </location>
</feature>
<feature type="transmembrane region" description="Helical" evidence="1">
    <location>
        <begin position="10"/>
        <end position="29"/>
    </location>
</feature>
<feature type="transmembrane region" description="Helical" evidence="1">
    <location>
        <begin position="44"/>
        <end position="63"/>
    </location>
</feature>
<feature type="transmembrane region" description="Helical" evidence="1">
    <location>
        <begin position="70"/>
        <end position="87"/>
    </location>
</feature>
<feature type="transmembrane region" description="Helical" evidence="1">
    <location>
        <begin position="116"/>
        <end position="138"/>
    </location>
</feature>
<feature type="disulfide bond" description="Redox-active" evidence="1">
    <location>
        <begin position="39"/>
        <end position="42"/>
    </location>
</feature>
<feature type="disulfide bond" description="Redox-active" evidence="1">
    <location>
        <begin position="100"/>
        <end position="107"/>
    </location>
</feature>
<evidence type="ECO:0000255" key="1">
    <source>
        <dbReference type="HAMAP-Rule" id="MF_00287"/>
    </source>
</evidence>
<reference key="1">
    <citation type="journal article" date="2003" name="J. Mol. Biol.">
        <title>Complete nucleotide sequence of carbazole/dioxin-degrading plasmid pCAR1 in Pseudomonas resinovorans strain CA10 indicates its mosaicity and the presence of large catabolic transposon Tn4676.</title>
        <authorList>
            <person name="Maeda K."/>
            <person name="Nojiri H."/>
            <person name="Shintani M."/>
            <person name="Yoshida T."/>
            <person name="Habe H."/>
            <person name="Omori T."/>
        </authorList>
    </citation>
    <scope>NUCLEOTIDE SEQUENCE [GENOMIC DNA]</scope>
    <source>
        <strain>CA10</strain>
    </source>
</reference>
<organism>
    <name type="scientific">Metapseudomonas resinovorans</name>
    <name type="common">Pseudomonas resinovorans</name>
    <dbReference type="NCBI Taxonomy" id="53412"/>
    <lineage>
        <taxon>Bacteria</taxon>
        <taxon>Pseudomonadati</taxon>
        <taxon>Pseudomonadota</taxon>
        <taxon>Gammaproteobacteria</taxon>
        <taxon>Pseudomonadales</taxon>
        <taxon>Pseudomonadaceae</taxon>
        <taxon>Metapseudomonas</taxon>
    </lineage>
</organism>